<evidence type="ECO:0000255" key="1">
    <source>
        <dbReference type="HAMAP-Rule" id="MF_00057"/>
    </source>
</evidence>
<accession>Q5WVD2</accession>
<reference key="1">
    <citation type="journal article" date="2004" name="Nat. Genet.">
        <title>Evidence in the Legionella pneumophila genome for exploitation of host cell functions and high genome plasticity.</title>
        <authorList>
            <person name="Cazalet C."/>
            <person name="Rusniok C."/>
            <person name="Brueggemann H."/>
            <person name="Zidane N."/>
            <person name="Magnier A."/>
            <person name="Ma L."/>
            <person name="Tichit M."/>
            <person name="Jarraud S."/>
            <person name="Bouchier C."/>
            <person name="Vandenesch F."/>
            <person name="Kunst F."/>
            <person name="Etienne J."/>
            <person name="Glaser P."/>
            <person name="Buchrieser C."/>
        </authorList>
    </citation>
    <scope>NUCLEOTIDE SEQUENCE [LARGE SCALE GENOMIC DNA]</scope>
    <source>
        <strain>Lens</strain>
    </source>
</reference>
<proteinExistence type="inferred from homology"/>
<organism>
    <name type="scientific">Legionella pneumophila (strain Lens)</name>
    <dbReference type="NCBI Taxonomy" id="297245"/>
    <lineage>
        <taxon>Bacteria</taxon>
        <taxon>Pseudomonadati</taxon>
        <taxon>Pseudomonadota</taxon>
        <taxon>Gammaproteobacteria</taxon>
        <taxon>Legionellales</taxon>
        <taxon>Legionellaceae</taxon>
        <taxon>Legionella</taxon>
    </lineage>
</organism>
<keyword id="KW-0963">Cytoplasm</keyword>
<keyword id="KW-0448">Lipopolysaccharide biosynthesis</keyword>
<keyword id="KW-0548">Nucleotidyltransferase</keyword>
<keyword id="KW-0808">Transferase</keyword>
<gene>
    <name evidence="1" type="primary">kdsB</name>
    <name type="ordered locus">lpl1883</name>
</gene>
<feature type="chain" id="PRO_0000370080" description="3-deoxy-manno-octulosonate cytidylyltransferase">
    <location>
        <begin position="1"/>
        <end position="250"/>
    </location>
</feature>
<name>KDSB_LEGPL</name>
<sequence>MSHNFHVIIPARYHSSRFPGKLLQEINGITVIERVYRQALLAEPMSVIIATDHDEIADRAIQFGAEVVITSHTHQTGTDRIAEVVAKGSFAPDDVIVNVQGDEPFIRPQLIQQVACSLTKTKAPVSTLCWPISSLQILNNPNVVKVVRTRDNHALYFSRSAIPFHRDDKNAYSNTFRHIGLYAYRAAFLLEFVSWPPCTLEQIECLEQLRILWSGFSIRVEEACEEPLQDINTKEDLILAQQYFLDTFNV</sequence>
<protein>
    <recommendedName>
        <fullName evidence="1">3-deoxy-manno-octulosonate cytidylyltransferase</fullName>
        <ecNumber evidence="1">2.7.7.38</ecNumber>
    </recommendedName>
    <alternativeName>
        <fullName evidence="1">CMP-2-keto-3-deoxyoctulosonic acid synthase</fullName>
        <shortName evidence="1">CKS</shortName>
        <shortName evidence="1">CMP-KDO synthase</shortName>
    </alternativeName>
</protein>
<comment type="function">
    <text evidence="1">Activates KDO (a required 8-carbon sugar) for incorporation into bacterial lipopolysaccharide in Gram-negative bacteria.</text>
</comment>
<comment type="catalytic activity">
    <reaction evidence="1">
        <text>3-deoxy-alpha-D-manno-oct-2-ulosonate + CTP = CMP-3-deoxy-beta-D-manno-octulosonate + diphosphate</text>
        <dbReference type="Rhea" id="RHEA:23448"/>
        <dbReference type="ChEBI" id="CHEBI:33019"/>
        <dbReference type="ChEBI" id="CHEBI:37563"/>
        <dbReference type="ChEBI" id="CHEBI:85986"/>
        <dbReference type="ChEBI" id="CHEBI:85987"/>
        <dbReference type="EC" id="2.7.7.38"/>
    </reaction>
</comment>
<comment type="pathway">
    <text evidence="1">Nucleotide-sugar biosynthesis; CMP-3-deoxy-D-manno-octulosonate biosynthesis; CMP-3-deoxy-D-manno-octulosonate from 3-deoxy-D-manno-octulosonate and CTP: step 1/1.</text>
</comment>
<comment type="pathway">
    <text evidence="1">Bacterial outer membrane biogenesis; lipopolysaccharide biosynthesis.</text>
</comment>
<comment type="subcellular location">
    <subcellularLocation>
        <location evidence="1">Cytoplasm</location>
    </subcellularLocation>
</comment>
<comment type="similarity">
    <text evidence="1">Belongs to the KdsB family.</text>
</comment>
<dbReference type="EC" id="2.7.7.38" evidence="1"/>
<dbReference type="EMBL" id="CR628337">
    <property type="protein sequence ID" value="CAH16122.1"/>
    <property type="molecule type" value="Genomic_DNA"/>
</dbReference>
<dbReference type="RefSeq" id="WP_011215881.1">
    <property type="nucleotide sequence ID" value="NC_006369.1"/>
</dbReference>
<dbReference type="SMR" id="Q5WVD2"/>
<dbReference type="KEGG" id="lpf:lpl1883"/>
<dbReference type="LegioList" id="lpl1883"/>
<dbReference type="HOGENOM" id="CLU_065038_1_0_6"/>
<dbReference type="UniPathway" id="UPA00030"/>
<dbReference type="UniPathway" id="UPA00358">
    <property type="reaction ID" value="UER00476"/>
</dbReference>
<dbReference type="Proteomes" id="UP000002517">
    <property type="component" value="Chromosome"/>
</dbReference>
<dbReference type="GO" id="GO:0005829">
    <property type="term" value="C:cytosol"/>
    <property type="evidence" value="ECO:0007669"/>
    <property type="project" value="TreeGrafter"/>
</dbReference>
<dbReference type="GO" id="GO:0008690">
    <property type="term" value="F:3-deoxy-manno-octulosonate cytidylyltransferase activity"/>
    <property type="evidence" value="ECO:0007669"/>
    <property type="project" value="UniProtKB-UniRule"/>
</dbReference>
<dbReference type="GO" id="GO:0033468">
    <property type="term" value="P:CMP-keto-3-deoxy-D-manno-octulosonic acid biosynthetic process"/>
    <property type="evidence" value="ECO:0007669"/>
    <property type="project" value="UniProtKB-UniRule"/>
</dbReference>
<dbReference type="GO" id="GO:0009103">
    <property type="term" value="P:lipopolysaccharide biosynthetic process"/>
    <property type="evidence" value="ECO:0007669"/>
    <property type="project" value="UniProtKB-UniRule"/>
</dbReference>
<dbReference type="CDD" id="cd02517">
    <property type="entry name" value="CMP-KDO-Synthetase"/>
    <property type="match status" value="1"/>
</dbReference>
<dbReference type="FunFam" id="3.90.550.10:FF:000011">
    <property type="entry name" value="3-deoxy-manno-octulosonate cytidylyltransferase"/>
    <property type="match status" value="1"/>
</dbReference>
<dbReference type="Gene3D" id="3.90.550.10">
    <property type="entry name" value="Spore Coat Polysaccharide Biosynthesis Protein SpsA, Chain A"/>
    <property type="match status" value="1"/>
</dbReference>
<dbReference type="HAMAP" id="MF_00057">
    <property type="entry name" value="KdsB"/>
    <property type="match status" value="1"/>
</dbReference>
<dbReference type="InterPro" id="IPR003329">
    <property type="entry name" value="Cytidylyl_trans"/>
</dbReference>
<dbReference type="InterPro" id="IPR004528">
    <property type="entry name" value="KdsB"/>
</dbReference>
<dbReference type="InterPro" id="IPR029044">
    <property type="entry name" value="Nucleotide-diphossugar_trans"/>
</dbReference>
<dbReference type="NCBIfam" id="TIGR00466">
    <property type="entry name" value="kdsB"/>
    <property type="match status" value="1"/>
</dbReference>
<dbReference type="NCBIfam" id="NF003950">
    <property type="entry name" value="PRK05450.1-3"/>
    <property type="match status" value="1"/>
</dbReference>
<dbReference type="NCBIfam" id="NF003952">
    <property type="entry name" value="PRK05450.1-5"/>
    <property type="match status" value="1"/>
</dbReference>
<dbReference type="PANTHER" id="PTHR42866">
    <property type="entry name" value="3-DEOXY-MANNO-OCTULOSONATE CYTIDYLYLTRANSFERASE"/>
    <property type="match status" value="1"/>
</dbReference>
<dbReference type="PANTHER" id="PTHR42866:SF2">
    <property type="entry name" value="3-DEOXY-MANNO-OCTULOSONATE CYTIDYLYLTRANSFERASE, MITOCHONDRIAL"/>
    <property type="match status" value="1"/>
</dbReference>
<dbReference type="Pfam" id="PF02348">
    <property type="entry name" value="CTP_transf_3"/>
    <property type="match status" value="1"/>
</dbReference>
<dbReference type="SUPFAM" id="SSF53448">
    <property type="entry name" value="Nucleotide-diphospho-sugar transferases"/>
    <property type="match status" value="1"/>
</dbReference>